<dbReference type="EC" id="4.1.3.40" evidence="1"/>
<dbReference type="EMBL" id="FM200053">
    <property type="protein sequence ID" value="CAR62043.1"/>
    <property type="molecule type" value="Genomic_DNA"/>
</dbReference>
<dbReference type="RefSeq" id="WP_000019219.1">
    <property type="nucleotide sequence ID" value="NC_011147.1"/>
</dbReference>
<dbReference type="SMR" id="B5BJV6"/>
<dbReference type="KEGG" id="sek:SSPA3759"/>
<dbReference type="HOGENOM" id="CLU_096824_1_0_6"/>
<dbReference type="UniPathway" id="UPA00232"/>
<dbReference type="Proteomes" id="UP000001869">
    <property type="component" value="Chromosome"/>
</dbReference>
<dbReference type="GO" id="GO:0005829">
    <property type="term" value="C:cytosol"/>
    <property type="evidence" value="ECO:0007669"/>
    <property type="project" value="TreeGrafter"/>
</dbReference>
<dbReference type="GO" id="GO:0008813">
    <property type="term" value="F:chorismate lyase activity"/>
    <property type="evidence" value="ECO:0007669"/>
    <property type="project" value="UniProtKB-UniRule"/>
</dbReference>
<dbReference type="GO" id="GO:0042866">
    <property type="term" value="P:pyruvate biosynthetic process"/>
    <property type="evidence" value="ECO:0007669"/>
    <property type="project" value="UniProtKB-UniRule"/>
</dbReference>
<dbReference type="GO" id="GO:0006744">
    <property type="term" value="P:ubiquinone biosynthetic process"/>
    <property type="evidence" value="ECO:0007669"/>
    <property type="project" value="UniProtKB-UniRule"/>
</dbReference>
<dbReference type="FunFam" id="3.40.1410.10:FF:000002">
    <property type="entry name" value="Chorismate pyruvate-lyase"/>
    <property type="match status" value="1"/>
</dbReference>
<dbReference type="Gene3D" id="3.40.1410.10">
    <property type="entry name" value="Chorismate lyase-like"/>
    <property type="match status" value="1"/>
</dbReference>
<dbReference type="HAMAP" id="MF_01632">
    <property type="entry name" value="UbiC"/>
    <property type="match status" value="1"/>
</dbReference>
<dbReference type="InterPro" id="IPR007440">
    <property type="entry name" value="Chorismate--pyruvate_lyase"/>
</dbReference>
<dbReference type="InterPro" id="IPR028978">
    <property type="entry name" value="Chorismate_lyase_/UTRA_dom_sf"/>
</dbReference>
<dbReference type="NCBIfam" id="NF008656">
    <property type="entry name" value="PRK11655.1"/>
    <property type="match status" value="1"/>
</dbReference>
<dbReference type="PANTHER" id="PTHR38683">
    <property type="entry name" value="CHORISMATE PYRUVATE-LYASE"/>
    <property type="match status" value="1"/>
</dbReference>
<dbReference type="PANTHER" id="PTHR38683:SF1">
    <property type="entry name" value="CHORISMATE PYRUVATE-LYASE"/>
    <property type="match status" value="1"/>
</dbReference>
<dbReference type="Pfam" id="PF04345">
    <property type="entry name" value="Chor_lyase"/>
    <property type="match status" value="1"/>
</dbReference>
<dbReference type="SUPFAM" id="SSF64288">
    <property type="entry name" value="Chorismate lyase-like"/>
    <property type="match status" value="1"/>
</dbReference>
<proteinExistence type="inferred from homology"/>
<keyword id="KW-0963">Cytoplasm</keyword>
<keyword id="KW-0456">Lyase</keyword>
<keyword id="KW-0670">Pyruvate</keyword>
<keyword id="KW-0831">Ubiquinone biosynthesis</keyword>
<reference key="1">
    <citation type="journal article" date="2009" name="BMC Genomics">
        <title>Pseudogene accumulation in the evolutionary histories of Salmonella enterica serovars Paratyphi A and Typhi.</title>
        <authorList>
            <person name="Holt K.E."/>
            <person name="Thomson N.R."/>
            <person name="Wain J."/>
            <person name="Langridge G.C."/>
            <person name="Hasan R."/>
            <person name="Bhutta Z.A."/>
            <person name="Quail M.A."/>
            <person name="Norbertczak H."/>
            <person name="Walker D."/>
            <person name="Simmonds M."/>
            <person name="White B."/>
            <person name="Bason N."/>
            <person name="Mungall K."/>
            <person name="Dougan G."/>
            <person name="Parkhill J."/>
        </authorList>
    </citation>
    <scope>NUCLEOTIDE SEQUENCE [LARGE SCALE GENOMIC DNA]</scope>
    <source>
        <strain>AKU_12601</strain>
    </source>
</reference>
<comment type="function">
    <text evidence="1">Removes the pyruvyl group from chorismate, with concomitant aromatization of the ring, to provide 4-hydroxybenzoate (4HB) for the ubiquinone pathway.</text>
</comment>
<comment type="catalytic activity">
    <reaction evidence="1">
        <text>chorismate = 4-hydroxybenzoate + pyruvate</text>
        <dbReference type="Rhea" id="RHEA:16505"/>
        <dbReference type="ChEBI" id="CHEBI:15361"/>
        <dbReference type="ChEBI" id="CHEBI:17879"/>
        <dbReference type="ChEBI" id="CHEBI:29748"/>
        <dbReference type="EC" id="4.1.3.40"/>
    </reaction>
</comment>
<comment type="pathway">
    <text evidence="1">Cofactor biosynthesis; ubiquinone biosynthesis.</text>
</comment>
<comment type="subunit">
    <text evidence="1">Monomer.</text>
</comment>
<comment type="subcellular location">
    <subcellularLocation>
        <location evidence="1">Cytoplasm</location>
    </subcellularLocation>
</comment>
<comment type="similarity">
    <text evidence="1">Belongs to the UbiC family.</text>
</comment>
<sequence length="165" mass="18720">MSHPALTQLRALRYFDAIPALEPHLLDWLLLEDSMTKRFEQQGKRVSVTLIREAFVGQSEVEEASGLLPSESRYWLREILLCADGEPWLAGRTVVPESTLCGPEQVLQHLGKTPLGRYLFTSSTLTRDFIEIGRDATLWGRRSRLRLSGKPLLLTELFLPASPLY</sequence>
<feature type="chain" id="PRO_1000186538" description="Chorismate pyruvate-lyase">
    <location>
        <begin position="1"/>
        <end position="165"/>
    </location>
</feature>
<feature type="binding site" evidence="1">
    <location>
        <position position="35"/>
    </location>
    <ligand>
        <name>substrate</name>
    </ligand>
</feature>
<feature type="binding site" evidence="1">
    <location>
        <position position="77"/>
    </location>
    <ligand>
        <name>substrate</name>
    </ligand>
</feature>
<feature type="binding site" evidence="1">
    <location>
        <position position="115"/>
    </location>
    <ligand>
        <name>substrate</name>
    </ligand>
</feature>
<feature type="binding site" evidence="1">
    <location>
        <position position="156"/>
    </location>
    <ligand>
        <name>substrate</name>
    </ligand>
</feature>
<gene>
    <name evidence="1" type="primary">ubiC</name>
    <name type="ordered locus">SSPA3759</name>
</gene>
<organism>
    <name type="scientific">Salmonella paratyphi A (strain AKU_12601)</name>
    <dbReference type="NCBI Taxonomy" id="554290"/>
    <lineage>
        <taxon>Bacteria</taxon>
        <taxon>Pseudomonadati</taxon>
        <taxon>Pseudomonadota</taxon>
        <taxon>Gammaproteobacteria</taxon>
        <taxon>Enterobacterales</taxon>
        <taxon>Enterobacteriaceae</taxon>
        <taxon>Salmonella</taxon>
    </lineage>
</organism>
<name>UBIC_SALPK</name>
<evidence type="ECO:0000255" key="1">
    <source>
        <dbReference type="HAMAP-Rule" id="MF_01632"/>
    </source>
</evidence>
<protein>
    <recommendedName>
        <fullName evidence="1">Chorismate pyruvate-lyase</fullName>
        <shortName evidence="1">CL</shortName>
        <shortName evidence="1">CPL</shortName>
        <ecNumber evidence="1">4.1.3.40</ecNumber>
    </recommendedName>
</protein>
<accession>B5BJV6</accession>